<name>RASN_XENLA</name>
<gene>
    <name type="primary">nras</name>
</gene>
<sequence length="189" mass="21382">MTEYKLVVVGAGGVGKSALTIQLIQNHFVDEYDPTIEDSYRKQVVIDGETCLLDILDTAGQEEYSAMRDQYMRTGEGFLCVFAINNSKSFADINAYREQIKRVKDSDDVPMVLVGNKCDLPSRTVDTKQAQELARSYGIPFIETSAKTRQGVEDAFYTLVREIHQYRMKKLDSSEDNNQGCIRIPCKLM</sequence>
<comment type="function">
    <text evidence="2">Ras proteins bind GDP/GTP and possess intrinsic GTPase activity.</text>
</comment>
<comment type="catalytic activity">
    <reaction evidence="3">
        <text>GTP + H2O = GDP + phosphate + H(+)</text>
        <dbReference type="Rhea" id="RHEA:19669"/>
        <dbReference type="ChEBI" id="CHEBI:15377"/>
        <dbReference type="ChEBI" id="CHEBI:15378"/>
        <dbReference type="ChEBI" id="CHEBI:37565"/>
        <dbReference type="ChEBI" id="CHEBI:43474"/>
        <dbReference type="ChEBI" id="CHEBI:58189"/>
        <dbReference type="EC" id="3.6.5.2"/>
    </reaction>
</comment>
<comment type="activity regulation">
    <text>Alternates between an inactive form bound to GDP and an active form bound to GTP. Activated by a guanine nucleotide-exchange factor (GEF) and inactivated by a GTPase-activating protein (GAP).</text>
</comment>
<comment type="subcellular location">
    <subcellularLocation>
        <location evidence="2">Cell membrane</location>
        <topology evidence="2">Lipid-anchor</topology>
        <orientation evidence="2">Cytoplasmic side</orientation>
    </subcellularLocation>
    <subcellularLocation>
        <location evidence="2">Golgi apparatus membrane</location>
        <topology evidence="2">Lipid-anchor</topology>
    </subcellularLocation>
    <text evidence="2">Shuttles between the plasma membrane and the Golgi apparatus.</text>
</comment>
<comment type="developmental stage">
    <text evidence="5">Present in fully grown and progesterone-matured oocytes. The level change vera little even after zygotic gene transcription begins following the mid-blastula transition. Do not increase in abundance in the gastrula, neurula, tailbud, or tadpole embryo.</text>
</comment>
<comment type="PTM">
    <text evidence="2">Palmitoylated by the ZDHHC9-GOLGA7 complex. Depalmitoylated by abhd17a, abhd17b and abhd17c. A continuous cycle of de- and re-palmitoylation regulates rapid exchange between plasma membrane and Golgi.</text>
</comment>
<comment type="similarity">
    <text evidence="6">Belongs to the small GTPase superfamily. Ras family.</text>
</comment>
<reference key="1">
    <citation type="journal article" date="1993" name="Mol. Cell. Biol.">
        <title>Saccharomyces cerevisiae cdc15 mutants arrested at a late stage in anaphase are rescued by Xenopus cDNAs encoding N-ras or a protein with beta-transducin repeats.</title>
        <authorList>
            <person name="Spevak W."/>
            <person name="Keiper B.D."/>
            <person name="Stratowa C."/>
            <person name="Castanon M.J."/>
        </authorList>
    </citation>
    <scope>NUCLEOTIDE SEQUENCE [MRNA]</scope>
    <scope>DEVELOPMENTAL STAGE</scope>
</reference>
<reference key="2">
    <citation type="submission" date="2007-03" db="EMBL/GenBank/DDBJ databases">
        <authorList>
            <consortium name="NIH - Xenopus Gene Collection (XGC) project"/>
        </authorList>
    </citation>
    <scope>NUCLEOTIDE SEQUENCE [LARGE SCALE MRNA]</scope>
    <source>
        <tissue>Ovary</tissue>
    </source>
</reference>
<organism>
    <name type="scientific">Xenopus laevis</name>
    <name type="common">African clawed frog</name>
    <dbReference type="NCBI Taxonomy" id="8355"/>
    <lineage>
        <taxon>Eukaryota</taxon>
        <taxon>Metazoa</taxon>
        <taxon>Chordata</taxon>
        <taxon>Craniata</taxon>
        <taxon>Vertebrata</taxon>
        <taxon>Euteleostomi</taxon>
        <taxon>Amphibia</taxon>
        <taxon>Batrachia</taxon>
        <taxon>Anura</taxon>
        <taxon>Pipoidea</taxon>
        <taxon>Pipidae</taxon>
        <taxon>Xenopodinae</taxon>
        <taxon>Xenopus</taxon>
        <taxon>Xenopus</taxon>
    </lineage>
</organism>
<protein>
    <recommendedName>
        <fullName>GTPase NRas</fullName>
        <ecNumber evidence="3">3.6.5.2</ecNumber>
    </recommendedName>
    <alternativeName>
        <fullName>Transforming protein N-Ras</fullName>
    </alternativeName>
</protein>
<dbReference type="EC" id="3.6.5.2" evidence="3"/>
<dbReference type="EMBL" id="M97960">
    <property type="protein sequence ID" value="AAA02809.1"/>
    <property type="molecule type" value="mRNA"/>
</dbReference>
<dbReference type="EMBL" id="BC133746">
    <property type="protein sequence ID" value="AAI33747.1"/>
    <property type="molecule type" value="mRNA"/>
</dbReference>
<dbReference type="PIR" id="A48088">
    <property type="entry name" value="A48088"/>
</dbReference>
<dbReference type="RefSeq" id="NP_001084337.1">
    <property type="nucleotide sequence ID" value="NM_001090868.1"/>
</dbReference>
<dbReference type="RefSeq" id="XP_018100433.1">
    <property type="nucleotide sequence ID" value="XM_018244944.1"/>
</dbReference>
<dbReference type="SMR" id="Q91806"/>
<dbReference type="DNASU" id="399446"/>
<dbReference type="GeneID" id="399446"/>
<dbReference type="KEGG" id="xla:399446"/>
<dbReference type="AGR" id="Xenbase:XB-GENE-6085929"/>
<dbReference type="CTD" id="399446"/>
<dbReference type="Xenbase" id="XB-GENE-6085929">
    <property type="gene designation" value="nras.L"/>
</dbReference>
<dbReference type="OMA" id="RAVDIWG"/>
<dbReference type="OrthoDB" id="5976022at2759"/>
<dbReference type="Proteomes" id="UP000186698">
    <property type="component" value="Chromosome 2L"/>
</dbReference>
<dbReference type="Bgee" id="399446">
    <property type="expression patterns" value="Expressed in gastrula and 19 other cell types or tissues"/>
</dbReference>
<dbReference type="GO" id="GO:0000139">
    <property type="term" value="C:Golgi membrane"/>
    <property type="evidence" value="ECO:0007669"/>
    <property type="project" value="UniProtKB-SubCell"/>
</dbReference>
<dbReference type="GO" id="GO:0005886">
    <property type="term" value="C:plasma membrane"/>
    <property type="evidence" value="ECO:0000318"/>
    <property type="project" value="GO_Central"/>
</dbReference>
<dbReference type="GO" id="GO:0003925">
    <property type="term" value="F:G protein activity"/>
    <property type="evidence" value="ECO:0007669"/>
    <property type="project" value="UniProtKB-EC"/>
</dbReference>
<dbReference type="GO" id="GO:0019003">
    <property type="term" value="F:GDP binding"/>
    <property type="evidence" value="ECO:0000318"/>
    <property type="project" value="GO_Central"/>
</dbReference>
<dbReference type="GO" id="GO:0005525">
    <property type="term" value="F:GTP binding"/>
    <property type="evidence" value="ECO:0000318"/>
    <property type="project" value="GO_Central"/>
</dbReference>
<dbReference type="GO" id="GO:0003924">
    <property type="term" value="F:GTPase activity"/>
    <property type="evidence" value="ECO:0000250"/>
    <property type="project" value="UniProtKB"/>
</dbReference>
<dbReference type="GO" id="GO:0007265">
    <property type="term" value="P:Ras protein signal transduction"/>
    <property type="evidence" value="ECO:0000250"/>
    <property type="project" value="UniProtKB"/>
</dbReference>
<dbReference type="CDD" id="cd04138">
    <property type="entry name" value="H_N_K_Ras_like"/>
    <property type="match status" value="1"/>
</dbReference>
<dbReference type="FunFam" id="3.40.50.300:FF:000096">
    <property type="entry name" value="KRAS proto-oncogene, GTPase"/>
    <property type="match status" value="1"/>
</dbReference>
<dbReference type="Gene3D" id="3.40.50.300">
    <property type="entry name" value="P-loop containing nucleotide triphosphate hydrolases"/>
    <property type="match status" value="1"/>
</dbReference>
<dbReference type="InterPro" id="IPR027417">
    <property type="entry name" value="P-loop_NTPase"/>
</dbReference>
<dbReference type="InterPro" id="IPR005225">
    <property type="entry name" value="Small_GTP-bd"/>
</dbReference>
<dbReference type="InterPro" id="IPR001806">
    <property type="entry name" value="Small_GTPase"/>
</dbReference>
<dbReference type="InterPro" id="IPR020849">
    <property type="entry name" value="Small_GTPase_Ras-type"/>
</dbReference>
<dbReference type="NCBIfam" id="TIGR00231">
    <property type="entry name" value="small_GTP"/>
    <property type="match status" value="1"/>
</dbReference>
<dbReference type="PANTHER" id="PTHR24070">
    <property type="entry name" value="RAS, DI-RAS, AND RHEB FAMILY MEMBERS OF SMALL GTPASE SUPERFAMILY"/>
    <property type="match status" value="1"/>
</dbReference>
<dbReference type="Pfam" id="PF00071">
    <property type="entry name" value="Ras"/>
    <property type="match status" value="1"/>
</dbReference>
<dbReference type="PRINTS" id="PR00449">
    <property type="entry name" value="RASTRNSFRMNG"/>
</dbReference>
<dbReference type="SMART" id="SM00175">
    <property type="entry name" value="RAB"/>
    <property type="match status" value="1"/>
</dbReference>
<dbReference type="SMART" id="SM00173">
    <property type="entry name" value="RAS"/>
    <property type="match status" value="1"/>
</dbReference>
<dbReference type="SMART" id="SM00174">
    <property type="entry name" value="RHO"/>
    <property type="match status" value="1"/>
</dbReference>
<dbReference type="SUPFAM" id="SSF52540">
    <property type="entry name" value="P-loop containing nucleoside triphosphate hydrolases"/>
    <property type="match status" value="1"/>
</dbReference>
<dbReference type="PROSITE" id="PS51421">
    <property type="entry name" value="RAS"/>
    <property type="match status" value="1"/>
</dbReference>
<proteinExistence type="evidence at transcript level"/>
<feature type="chain" id="PRO_0000043020" description="GTPase NRas">
    <location>
        <begin position="1"/>
        <end position="186"/>
    </location>
</feature>
<feature type="propeptide" id="PRO_0000043021" description="Removed in mature form" evidence="1">
    <location>
        <begin position="187"/>
        <end position="189"/>
    </location>
</feature>
<feature type="region of interest" description="Hypervariable region" evidence="1">
    <location>
        <begin position="166"/>
        <end position="185"/>
    </location>
</feature>
<feature type="short sequence motif" description="Effector region">
    <location>
        <begin position="32"/>
        <end position="40"/>
    </location>
</feature>
<feature type="binding site" evidence="2">
    <location>
        <begin position="10"/>
        <end position="17"/>
    </location>
    <ligand>
        <name>GTP</name>
        <dbReference type="ChEBI" id="CHEBI:37565"/>
    </ligand>
</feature>
<feature type="binding site" evidence="4">
    <location>
        <begin position="57"/>
        <end position="61"/>
    </location>
    <ligand>
        <name>GTP</name>
        <dbReference type="ChEBI" id="CHEBI:37565"/>
    </ligand>
</feature>
<feature type="binding site" evidence="2">
    <location>
        <begin position="116"/>
        <end position="119"/>
    </location>
    <ligand>
        <name>GTP</name>
        <dbReference type="ChEBI" id="CHEBI:37565"/>
    </ligand>
</feature>
<feature type="lipid moiety-binding region" description="S-palmitoyl cysteine" evidence="2">
    <location>
        <position position="181"/>
    </location>
</feature>
<feature type="lipid moiety-binding region" description="S-farnesyl cysteine" evidence="2">
    <location>
        <position position="186"/>
    </location>
</feature>
<accession>Q91806</accession>
<accession>A4FVD4</accession>
<evidence type="ECO:0000250" key="1"/>
<evidence type="ECO:0000250" key="2">
    <source>
        <dbReference type="UniProtKB" id="P01111"/>
    </source>
</evidence>
<evidence type="ECO:0000250" key="3">
    <source>
        <dbReference type="UniProtKB" id="P01116"/>
    </source>
</evidence>
<evidence type="ECO:0000255" key="4"/>
<evidence type="ECO:0000269" key="5">
    <source>
    </source>
</evidence>
<evidence type="ECO:0000305" key="6"/>
<keyword id="KW-1003">Cell membrane</keyword>
<keyword id="KW-0333">Golgi apparatus</keyword>
<keyword id="KW-0342">GTP-binding</keyword>
<keyword id="KW-0378">Hydrolase</keyword>
<keyword id="KW-0449">Lipoprotein</keyword>
<keyword id="KW-0472">Membrane</keyword>
<keyword id="KW-0488">Methylation</keyword>
<keyword id="KW-0547">Nucleotide-binding</keyword>
<keyword id="KW-0564">Palmitate</keyword>
<keyword id="KW-0636">Prenylation</keyword>
<keyword id="KW-1185">Reference proteome</keyword>